<name>RRF_STAA8</name>
<dbReference type="EMBL" id="CP000253">
    <property type="protein sequence ID" value="ABD30337.1"/>
    <property type="molecule type" value="Genomic_DNA"/>
</dbReference>
<dbReference type="RefSeq" id="WP_001280006.1">
    <property type="nucleotide sequence ID" value="NZ_LS483365.1"/>
</dbReference>
<dbReference type="RefSeq" id="YP_499769.1">
    <property type="nucleotide sequence ID" value="NC_007795.1"/>
</dbReference>
<dbReference type="SMR" id="Q2FZ21"/>
<dbReference type="STRING" id="93061.SAOUHSC_01236"/>
<dbReference type="PaxDb" id="1280-SAXN108_1261"/>
<dbReference type="GeneID" id="3920261"/>
<dbReference type="KEGG" id="sao:SAOUHSC_01236"/>
<dbReference type="PATRIC" id="fig|93061.5.peg.1130"/>
<dbReference type="eggNOG" id="COG0233">
    <property type="taxonomic scope" value="Bacteria"/>
</dbReference>
<dbReference type="HOGENOM" id="CLU_073981_2_0_9"/>
<dbReference type="OrthoDB" id="9804006at2"/>
<dbReference type="PRO" id="PR:Q2FZ21"/>
<dbReference type="Proteomes" id="UP000008816">
    <property type="component" value="Chromosome"/>
</dbReference>
<dbReference type="GO" id="GO:0005737">
    <property type="term" value="C:cytoplasm"/>
    <property type="evidence" value="ECO:0007669"/>
    <property type="project" value="UniProtKB-SubCell"/>
</dbReference>
<dbReference type="GO" id="GO:0043023">
    <property type="term" value="F:ribosomal large subunit binding"/>
    <property type="evidence" value="ECO:0000318"/>
    <property type="project" value="GO_Central"/>
</dbReference>
<dbReference type="GO" id="GO:0006412">
    <property type="term" value="P:translation"/>
    <property type="evidence" value="ECO:0000318"/>
    <property type="project" value="GO_Central"/>
</dbReference>
<dbReference type="GO" id="GO:0006415">
    <property type="term" value="P:translational termination"/>
    <property type="evidence" value="ECO:0007669"/>
    <property type="project" value="UniProtKB-UniRule"/>
</dbReference>
<dbReference type="CDD" id="cd00520">
    <property type="entry name" value="RRF"/>
    <property type="match status" value="1"/>
</dbReference>
<dbReference type="FunFam" id="1.10.132.20:FF:000001">
    <property type="entry name" value="Ribosome-recycling factor"/>
    <property type="match status" value="1"/>
</dbReference>
<dbReference type="FunFam" id="3.30.1360.40:FF:000001">
    <property type="entry name" value="Ribosome-recycling factor"/>
    <property type="match status" value="1"/>
</dbReference>
<dbReference type="Gene3D" id="3.30.1360.40">
    <property type="match status" value="1"/>
</dbReference>
<dbReference type="Gene3D" id="1.10.132.20">
    <property type="entry name" value="Ribosome-recycling factor"/>
    <property type="match status" value="1"/>
</dbReference>
<dbReference type="HAMAP" id="MF_00040">
    <property type="entry name" value="RRF"/>
    <property type="match status" value="1"/>
</dbReference>
<dbReference type="InterPro" id="IPR002661">
    <property type="entry name" value="Ribosome_recyc_fac"/>
</dbReference>
<dbReference type="InterPro" id="IPR023584">
    <property type="entry name" value="Ribosome_recyc_fac_dom"/>
</dbReference>
<dbReference type="InterPro" id="IPR036191">
    <property type="entry name" value="RRF_sf"/>
</dbReference>
<dbReference type="NCBIfam" id="TIGR00496">
    <property type="entry name" value="frr"/>
    <property type="match status" value="1"/>
</dbReference>
<dbReference type="PANTHER" id="PTHR20982:SF3">
    <property type="entry name" value="MITOCHONDRIAL RIBOSOME RECYCLING FACTOR PSEUDO 1"/>
    <property type="match status" value="1"/>
</dbReference>
<dbReference type="PANTHER" id="PTHR20982">
    <property type="entry name" value="RIBOSOME RECYCLING FACTOR"/>
    <property type="match status" value="1"/>
</dbReference>
<dbReference type="Pfam" id="PF01765">
    <property type="entry name" value="RRF"/>
    <property type="match status" value="1"/>
</dbReference>
<dbReference type="SUPFAM" id="SSF55194">
    <property type="entry name" value="Ribosome recycling factor, RRF"/>
    <property type="match status" value="1"/>
</dbReference>
<evidence type="ECO:0000255" key="1">
    <source>
        <dbReference type="HAMAP-Rule" id="MF_00040"/>
    </source>
</evidence>
<evidence type="ECO:0000256" key="2">
    <source>
        <dbReference type="SAM" id="MobiDB-lite"/>
    </source>
</evidence>
<keyword id="KW-0963">Cytoplasm</keyword>
<keyword id="KW-0648">Protein biosynthesis</keyword>
<keyword id="KW-1185">Reference proteome</keyword>
<reference key="1">
    <citation type="book" date="2006" name="Gram positive pathogens, 2nd edition">
        <title>The Staphylococcus aureus NCTC 8325 genome.</title>
        <editorList>
            <person name="Fischetti V."/>
            <person name="Novick R."/>
            <person name="Ferretti J."/>
            <person name="Portnoy D."/>
            <person name="Rood J."/>
        </editorList>
        <authorList>
            <person name="Gillaspy A.F."/>
            <person name="Worrell V."/>
            <person name="Orvis J."/>
            <person name="Roe B.A."/>
            <person name="Dyer D.W."/>
            <person name="Iandolo J.J."/>
        </authorList>
    </citation>
    <scope>NUCLEOTIDE SEQUENCE [LARGE SCALE GENOMIC DNA]</scope>
    <source>
        <strain>NCTC 8325 / PS 47</strain>
    </source>
</reference>
<sequence length="184" mass="20353">MSDIINETKSRMQKSIESLSRELANISAGRANSNLLNGVTVDYYGAPTPVQQLASINVPEARLLVISPYDKTSVADIEKAIIAANLGVNPTSDGEVIRIAVPALTEERRKERVKDVKKIGEEAKVSVRNIRRDMNDQLKKDEKNGDITEDELRSGTEDVQKATDNSIKEIDQMIADKEKDIMSV</sequence>
<protein>
    <recommendedName>
        <fullName evidence="1">Ribosome-recycling factor</fullName>
        <shortName evidence="1">RRF</shortName>
    </recommendedName>
    <alternativeName>
        <fullName evidence="1">Ribosome-releasing factor</fullName>
    </alternativeName>
</protein>
<accession>Q2FZ21</accession>
<proteinExistence type="inferred from homology"/>
<feature type="chain" id="PRO_1000003277" description="Ribosome-recycling factor">
    <location>
        <begin position="1"/>
        <end position="184"/>
    </location>
</feature>
<feature type="region of interest" description="Disordered" evidence="2">
    <location>
        <begin position="134"/>
        <end position="167"/>
    </location>
</feature>
<organism>
    <name type="scientific">Staphylococcus aureus (strain NCTC 8325 / PS 47)</name>
    <dbReference type="NCBI Taxonomy" id="93061"/>
    <lineage>
        <taxon>Bacteria</taxon>
        <taxon>Bacillati</taxon>
        <taxon>Bacillota</taxon>
        <taxon>Bacilli</taxon>
        <taxon>Bacillales</taxon>
        <taxon>Staphylococcaceae</taxon>
        <taxon>Staphylococcus</taxon>
    </lineage>
</organism>
<gene>
    <name evidence="1" type="primary">frr</name>
    <name type="ordered locus">SAOUHSC_01236</name>
</gene>
<comment type="function">
    <text evidence="1">Responsible for the release of ribosomes from messenger RNA at the termination of protein biosynthesis. May increase the efficiency of translation by recycling ribosomes from one round of translation to another.</text>
</comment>
<comment type="subcellular location">
    <subcellularLocation>
        <location evidence="1">Cytoplasm</location>
    </subcellularLocation>
</comment>
<comment type="similarity">
    <text evidence="1">Belongs to the RRF family.</text>
</comment>